<reference key="1">
    <citation type="submission" date="2008-04" db="EMBL/GenBank/DDBJ databases">
        <title>Complete sequence of Yersinia pseudotuberculosis PB1/+.</title>
        <authorList>
            <person name="Copeland A."/>
            <person name="Lucas S."/>
            <person name="Lapidus A."/>
            <person name="Glavina del Rio T."/>
            <person name="Dalin E."/>
            <person name="Tice H."/>
            <person name="Bruce D."/>
            <person name="Goodwin L."/>
            <person name="Pitluck S."/>
            <person name="Munk A.C."/>
            <person name="Brettin T."/>
            <person name="Detter J.C."/>
            <person name="Han C."/>
            <person name="Tapia R."/>
            <person name="Schmutz J."/>
            <person name="Larimer F."/>
            <person name="Land M."/>
            <person name="Hauser L."/>
            <person name="Challacombe J.F."/>
            <person name="Green L."/>
            <person name="Lindler L.E."/>
            <person name="Nikolich M.P."/>
            <person name="Richardson P."/>
        </authorList>
    </citation>
    <scope>NUCLEOTIDE SEQUENCE [LARGE SCALE GENOMIC DNA]</scope>
    <source>
        <strain>PB1/+</strain>
    </source>
</reference>
<accession>B2K4F5</accession>
<proteinExistence type="inferred from homology"/>
<evidence type="ECO:0000255" key="1">
    <source>
        <dbReference type="HAMAP-Rule" id="MF_01382"/>
    </source>
</evidence>
<evidence type="ECO:0000256" key="2">
    <source>
        <dbReference type="SAM" id="MobiDB-lite"/>
    </source>
</evidence>
<feature type="chain" id="PRO_1000145081" description="Protein translocase subunit SecA">
    <location>
        <begin position="1"/>
        <end position="904"/>
    </location>
</feature>
<feature type="region of interest" description="Disordered" evidence="2">
    <location>
        <begin position="851"/>
        <end position="870"/>
    </location>
</feature>
<feature type="binding site" evidence="1">
    <location>
        <position position="87"/>
    </location>
    <ligand>
        <name>ATP</name>
        <dbReference type="ChEBI" id="CHEBI:30616"/>
    </ligand>
</feature>
<feature type="binding site" evidence="1">
    <location>
        <begin position="105"/>
        <end position="109"/>
    </location>
    <ligand>
        <name>ATP</name>
        <dbReference type="ChEBI" id="CHEBI:30616"/>
    </ligand>
</feature>
<feature type="binding site" evidence="1">
    <location>
        <position position="512"/>
    </location>
    <ligand>
        <name>ATP</name>
        <dbReference type="ChEBI" id="CHEBI:30616"/>
    </ligand>
</feature>
<feature type="binding site" evidence="1">
    <location>
        <position position="888"/>
    </location>
    <ligand>
        <name>Zn(2+)</name>
        <dbReference type="ChEBI" id="CHEBI:29105"/>
    </ligand>
</feature>
<feature type="binding site" evidence="1">
    <location>
        <position position="890"/>
    </location>
    <ligand>
        <name>Zn(2+)</name>
        <dbReference type="ChEBI" id="CHEBI:29105"/>
    </ligand>
</feature>
<feature type="binding site" evidence="1">
    <location>
        <position position="899"/>
    </location>
    <ligand>
        <name>Zn(2+)</name>
        <dbReference type="ChEBI" id="CHEBI:29105"/>
    </ligand>
</feature>
<feature type="binding site" evidence="1">
    <location>
        <position position="900"/>
    </location>
    <ligand>
        <name>Zn(2+)</name>
        <dbReference type="ChEBI" id="CHEBI:29105"/>
    </ligand>
</feature>
<sequence>MLIKLLTKVFGSRNDRTLRRMQKVVDVINRMEPDIEKLTDTELRAKTDEFRERLAKGEVLENLIPEAFAVVREASKRVFGMRHFDVQLLGGMVLNERCIAEMRTGEGKTLTATLPAYLNALSGRGVHVVTVNDYLAQRDAENNRPLFEFLGLSIGINLPNMTAPAKRAAYAADITYGTNNEFGFDYLRDNMAFSPEERVQRQLHYALVDEVDSILIDEARTPLIISGPAEDSSEMYIRVNKLIPKLIRQEKEDSDSFQGEGHFSVDEKSRQVHLTERGLILIEQMLVEAGIMDEGESLYSPANIMLMHHVTAALRAHVLFTRDVDYIVKDGEVIIVDEHTGRTMQGRRWSDGLHQAVEAKEGVEIQNENQTLASITFQNYFRLYEKLAGMTGTADTEAFEFSSIYKLDTIVVPTNRPMIRKDLADLVYMTEQEKIGAIIEDIRERTANGQPVLVGTISIEKSEVVSAELTKAGIEHKVLNAKFHAMEAEIVSQAGQPGAVTIATNMAGRGTDIVLGGSWQSEIAALEDPTEEQIAAIKAAWQIRHDAVLASGGLHIIGTERHESRRIDNQLRGRAGRQGDAGSSRFYLSMEDALMRIFASDRVSGMMRKLGMKPGEAIEHPWVTKAIANAQRKVESRNFDIRKQLLEYDDVANDQRRAIYSQRNELLDVSDVSETINSIREDVFKTTIDSYIPTQSLEEMWDIEGLEQRLKNDFDLDMPIAKWLEDEPQLHEETLRERILQQAIETYQRKEEVVGIEMMRNFEKGVMLQTLDSLWKEHLAAMDYLRQGIHLRGYAQKDPKQEYKRESFAMFAAMLESLKYEVISVLSKVQVRMPEEVEALEVQRREEAERLARQQQLSHQTDNSALMSEEEVKVANSLERKVGRNDPCPCGSGKKYKQCHGRLQ</sequence>
<organism>
    <name type="scientific">Yersinia pseudotuberculosis serotype IB (strain PB1/+)</name>
    <dbReference type="NCBI Taxonomy" id="502801"/>
    <lineage>
        <taxon>Bacteria</taxon>
        <taxon>Pseudomonadati</taxon>
        <taxon>Pseudomonadota</taxon>
        <taxon>Gammaproteobacteria</taxon>
        <taxon>Enterobacterales</taxon>
        <taxon>Yersiniaceae</taxon>
        <taxon>Yersinia</taxon>
    </lineage>
</organism>
<gene>
    <name evidence="1" type="primary">secA</name>
    <name type="ordered locus">YPTS_0724</name>
</gene>
<keyword id="KW-0067">ATP-binding</keyword>
<keyword id="KW-0997">Cell inner membrane</keyword>
<keyword id="KW-1003">Cell membrane</keyword>
<keyword id="KW-0963">Cytoplasm</keyword>
<keyword id="KW-0472">Membrane</keyword>
<keyword id="KW-0479">Metal-binding</keyword>
<keyword id="KW-0547">Nucleotide-binding</keyword>
<keyword id="KW-0653">Protein transport</keyword>
<keyword id="KW-1278">Translocase</keyword>
<keyword id="KW-0811">Translocation</keyword>
<keyword id="KW-0813">Transport</keyword>
<keyword id="KW-0862">Zinc</keyword>
<protein>
    <recommendedName>
        <fullName evidence="1">Protein translocase subunit SecA</fullName>
        <ecNumber evidence="1">7.4.2.8</ecNumber>
    </recommendedName>
</protein>
<comment type="function">
    <text evidence="1">Part of the Sec protein translocase complex. Interacts with the SecYEG preprotein conducting channel. Has a central role in coupling the hydrolysis of ATP to the transfer of proteins into and across the cell membrane, serving both as a receptor for the preprotein-SecB complex and as an ATP-driven molecular motor driving the stepwise translocation of polypeptide chains across the membrane.</text>
</comment>
<comment type="catalytic activity">
    <reaction evidence="1">
        <text>ATP + H2O + cellular proteinSide 1 = ADP + phosphate + cellular proteinSide 2.</text>
        <dbReference type="EC" id="7.4.2.8"/>
    </reaction>
</comment>
<comment type="cofactor">
    <cofactor evidence="1">
        <name>Zn(2+)</name>
        <dbReference type="ChEBI" id="CHEBI:29105"/>
    </cofactor>
    <text evidence="1">May bind 1 zinc ion per subunit.</text>
</comment>
<comment type="subunit">
    <text evidence="1">Monomer and homodimer. Part of the essential Sec protein translocation apparatus which comprises SecA, SecYEG and auxiliary proteins SecDF-YajC and YidC.</text>
</comment>
<comment type="subcellular location">
    <subcellularLocation>
        <location evidence="1">Cell inner membrane</location>
        <topology evidence="1">Peripheral membrane protein</topology>
        <orientation evidence="1">Cytoplasmic side</orientation>
    </subcellularLocation>
    <subcellularLocation>
        <location evidence="1">Cytoplasm</location>
    </subcellularLocation>
    <text evidence="1">Distribution is 50-50.</text>
</comment>
<comment type="induction">
    <text evidence="1">Repressed under conditions of excess protein secretion capacity and derepressed when protein secretion becomes limiting. This is regulated by SecM.</text>
</comment>
<comment type="similarity">
    <text evidence="1">Belongs to the SecA family.</text>
</comment>
<dbReference type="EC" id="7.4.2.8" evidence="1"/>
<dbReference type="EMBL" id="CP001048">
    <property type="protein sequence ID" value="ACC87708.1"/>
    <property type="molecule type" value="Genomic_DNA"/>
</dbReference>
<dbReference type="RefSeq" id="WP_002210426.1">
    <property type="nucleotide sequence ID" value="NZ_CP009780.1"/>
</dbReference>
<dbReference type="SMR" id="B2K4F5"/>
<dbReference type="GeneID" id="57974051"/>
<dbReference type="KEGG" id="ypb:YPTS_0724"/>
<dbReference type="PATRIC" id="fig|502801.10.peg.55"/>
<dbReference type="GO" id="GO:0031522">
    <property type="term" value="C:cell envelope Sec protein transport complex"/>
    <property type="evidence" value="ECO:0007669"/>
    <property type="project" value="TreeGrafter"/>
</dbReference>
<dbReference type="GO" id="GO:0005829">
    <property type="term" value="C:cytosol"/>
    <property type="evidence" value="ECO:0007669"/>
    <property type="project" value="TreeGrafter"/>
</dbReference>
<dbReference type="GO" id="GO:0005886">
    <property type="term" value="C:plasma membrane"/>
    <property type="evidence" value="ECO:0007669"/>
    <property type="project" value="UniProtKB-SubCell"/>
</dbReference>
<dbReference type="GO" id="GO:0005524">
    <property type="term" value="F:ATP binding"/>
    <property type="evidence" value="ECO:0007669"/>
    <property type="project" value="UniProtKB-UniRule"/>
</dbReference>
<dbReference type="GO" id="GO:0046872">
    <property type="term" value="F:metal ion binding"/>
    <property type="evidence" value="ECO:0007669"/>
    <property type="project" value="UniProtKB-KW"/>
</dbReference>
<dbReference type="GO" id="GO:0008564">
    <property type="term" value="F:protein-exporting ATPase activity"/>
    <property type="evidence" value="ECO:0007669"/>
    <property type="project" value="UniProtKB-EC"/>
</dbReference>
<dbReference type="GO" id="GO:0065002">
    <property type="term" value="P:intracellular protein transmembrane transport"/>
    <property type="evidence" value="ECO:0007669"/>
    <property type="project" value="UniProtKB-UniRule"/>
</dbReference>
<dbReference type="GO" id="GO:0017038">
    <property type="term" value="P:protein import"/>
    <property type="evidence" value="ECO:0007669"/>
    <property type="project" value="InterPro"/>
</dbReference>
<dbReference type="GO" id="GO:0006605">
    <property type="term" value="P:protein targeting"/>
    <property type="evidence" value="ECO:0007669"/>
    <property type="project" value="UniProtKB-UniRule"/>
</dbReference>
<dbReference type="GO" id="GO:0043952">
    <property type="term" value="P:protein transport by the Sec complex"/>
    <property type="evidence" value="ECO:0007669"/>
    <property type="project" value="TreeGrafter"/>
</dbReference>
<dbReference type="CDD" id="cd17928">
    <property type="entry name" value="DEXDc_SecA"/>
    <property type="match status" value="1"/>
</dbReference>
<dbReference type="CDD" id="cd18803">
    <property type="entry name" value="SF2_C_secA"/>
    <property type="match status" value="1"/>
</dbReference>
<dbReference type="FunFam" id="1.10.3060.10:FF:000001">
    <property type="entry name" value="Preprotein translocase subunit SecA"/>
    <property type="match status" value="1"/>
</dbReference>
<dbReference type="FunFam" id="3.40.50.300:FF:000081">
    <property type="entry name" value="Preprotein translocase subunit SecA"/>
    <property type="match status" value="1"/>
</dbReference>
<dbReference type="FunFam" id="3.40.50.300:FF:000113">
    <property type="entry name" value="Preprotein translocase subunit SecA"/>
    <property type="match status" value="1"/>
</dbReference>
<dbReference type="FunFam" id="3.90.1440.10:FF:000001">
    <property type="entry name" value="Preprotein translocase subunit SecA"/>
    <property type="match status" value="1"/>
</dbReference>
<dbReference type="Gene3D" id="1.10.3060.10">
    <property type="entry name" value="Helical scaffold and wing domains of SecA"/>
    <property type="match status" value="1"/>
</dbReference>
<dbReference type="Gene3D" id="3.40.50.300">
    <property type="entry name" value="P-loop containing nucleotide triphosphate hydrolases"/>
    <property type="match status" value="2"/>
</dbReference>
<dbReference type="Gene3D" id="3.90.1440.10">
    <property type="entry name" value="SecA, preprotein cross-linking domain"/>
    <property type="match status" value="1"/>
</dbReference>
<dbReference type="HAMAP" id="MF_01382">
    <property type="entry name" value="SecA"/>
    <property type="match status" value="1"/>
</dbReference>
<dbReference type="InterPro" id="IPR014001">
    <property type="entry name" value="Helicase_ATP-bd"/>
</dbReference>
<dbReference type="InterPro" id="IPR027417">
    <property type="entry name" value="P-loop_NTPase"/>
</dbReference>
<dbReference type="InterPro" id="IPR004027">
    <property type="entry name" value="SEC_C_motif"/>
</dbReference>
<dbReference type="InterPro" id="IPR000185">
    <property type="entry name" value="SecA"/>
</dbReference>
<dbReference type="InterPro" id="IPR020937">
    <property type="entry name" value="SecA_CS"/>
</dbReference>
<dbReference type="InterPro" id="IPR011115">
    <property type="entry name" value="SecA_DEAD"/>
</dbReference>
<dbReference type="InterPro" id="IPR014018">
    <property type="entry name" value="SecA_motor_DEAD"/>
</dbReference>
<dbReference type="InterPro" id="IPR011130">
    <property type="entry name" value="SecA_preprotein_X-link_dom"/>
</dbReference>
<dbReference type="InterPro" id="IPR044722">
    <property type="entry name" value="SecA_SF2_C"/>
</dbReference>
<dbReference type="InterPro" id="IPR011116">
    <property type="entry name" value="SecA_Wing/Scaffold"/>
</dbReference>
<dbReference type="InterPro" id="IPR036266">
    <property type="entry name" value="SecA_Wing/Scaffold_sf"/>
</dbReference>
<dbReference type="InterPro" id="IPR036670">
    <property type="entry name" value="SecA_X-link_sf"/>
</dbReference>
<dbReference type="NCBIfam" id="NF009538">
    <property type="entry name" value="PRK12904.1"/>
    <property type="match status" value="1"/>
</dbReference>
<dbReference type="NCBIfam" id="TIGR00963">
    <property type="entry name" value="secA"/>
    <property type="match status" value="1"/>
</dbReference>
<dbReference type="PANTHER" id="PTHR30612:SF0">
    <property type="entry name" value="CHLOROPLAST PROTEIN-TRANSPORTING ATPASE"/>
    <property type="match status" value="1"/>
</dbReference>
<dbReference type="PANTHER" id="PTHR30612">
    <property type="entry name" value="SECA INNER MEMBRANE COMPONENT OF SEC PROTEIN SECRETION SYSTEM"/>
    <property type="match status" value="1"/>
</dbReference>
<dbReference type="Pfam" id="PF21090">
    <property type="entry name" value="P-loop_SecA"/>
    <property type="match status" value="1"/>
</dbReference>
<dbReference type="Pfam" id="PF02810">
    <property type="entry name" value="SEC-C"/>
    <property type="match status" value="1"/>
</dbReference>
<dbReference type="Pfam" id="PF07517">
    <property type="entry name" value="SecA_DEAD"/>
    <property type="match status" value="1"/>
</dbReference>
<dbReference type="Pfam" id="PF01043">
    <property type="entry name" value="SecA_PP_bind"/>
    <property type="match status" value="1"/>
</dbReference>
<dbReference type="Pfam" id="PF07516">
    <property type="entry name" value="SecA_SW"/>
    <property type="match status" value="1"/>
</dbReference>
<dbReference type="PRINTS" id="PR00906">
    <property type="entry name" value="SECA"/>
</dbReference>
<dbReference type="SMART" id="SM00957">
    <property type="entry name" value="SecA_DEAD"/>
    <property type="match status" value="1"/>
</dbReference>
<dbReference type="SMART" id="SM00958">
    <property type="entry name" value="SecA_PP_bind"/>
    <property type="match status" value="1"/>
</dbReference>
<dbReference type="SUPFAM" id="SSF81886">
    <property type="entry name" value="Helical scaffold and wing domains of SecA"/>
    <property type="match status" value="1"/>
</dbReference>
<dbReference type="SUPFAM" id="SSF52540">
    <property type="entry name" value="P-loop containing nucleoside triphosphate hydrolases"/>
    <property type="match status" value="2"/>
</dbReference>
<dbReference type="SUPFAM" id="SSF81767">
    <property type="entry name" value="Pre-protein crosslinking domain of SecA"/>
    <property type="match status" value="1"/>
</dbReference>
<dbReference type="PROSITE" id="PS01312">
    <property type="entry name" value="SECA"/>
    <property type="match status" value="1"/>
</dbReference>
<dbReference type="PROSITE" id="PS51196">
    <property type="entry name" value="SECA_MOTOR_DEAD"/>
    <property type="match status" value="1"/>
</dbReference>
<name>SECA_YERPB</name>